<keyword id="KW-0002">3D-structure</keyword>
<keyword id="KW-0051">Antiviral defense</keyword>
<keyword id="KW-0238">DNA-binding</keyword>
<keyword id="KW-0255">Endonuclease</keyword>
<keyword id="KW-0378">Hydrolase</keyword>
<keyword id="KW-0460">Magnesium</keyword>
<keyword id="KW-0464">Manganese</keyword>
<keyword id="KW-0479">Metal-binding</keyword>
<keyword id="KW-0540">Nuclease</keyword>
<keyword id="KW-0694">RNA-binding</keyword>
<sequence length="1409" mass="163571">MLFNKCIIISINLDFSNKEKCMTKPYSIGLDIGTNSVGWAVITDNYKVPSKKMKVLGNTSKKYIKKNLLGVLLFDSGITAEGRRLKRTARRRYTRRRNRILYLQEIFSTEMATLDDAFFQRLDDSFLVPDDKRDSKYPIFGNLVEEKVYHDEFPTIYHLRKYLADSTKKADLRLVYLALAHMIKYRGHFLIEGEFNSKNNDIQKNFQDFLDTYNAIFESDLSLENSKQLEEIVKDKISKLEKKDRILKLFPGEKNSGIFSEFLKLIVGNQADFRKCFNLDEKASLHFSKESYDEDLETLLGYIGDDYSDVFLKAKKLYDAILLSGFLTVTDNETEAPLSSAMIKRYNEHKEDLALLKEYIRNISLKTYNEVFKDDTKNGYAGYIDGKTNQEDFYVYLKNLLAEFEGADYFLEKIDREDFLRKQRTFDNGSIPYQIHLQEMRAILDKQAKFYPFLAKNKERIEKILTFRIPYYVGPLARGNSDFAWSIRKRNEKITPWNFEDVIDKESSAEAFINRMTSFDLYLPEEKVLPKHSLLYETFNVYNELTKVRFIAESMRDYQFLDSKQKKDIVRLYFKDKRKVTDKDIIEYLHAIYGYDGIELKGIEKQFNSSLSTYHDLLNIINDKEFLDDSSNEAIIEEIIHTLTIFEDREMIKQRLSKFENIFDKSVLKKLSRRHYTGWGKLSAKLINGIRDEKSGNTILDYLIDDGISNRNFMQLIHDDALSFKKKIQKAQIIGDEDKGNIKEVVKSLPGSPAIKKGILQSIKIVDELVKVMGGRKPESIVVEMARENQYTNQGKSNSQQRLKRLEKSLKELGSKILKENIPAKLSKIDNNALQNDRLYLYYLQNGKDMYTGDDLDIDRLSNYDIDHIIPQAFLKDNSIDNKVLVSSASNRGKSDDFPSLEVVKKRKTFWYQLLKSKLISQRKFDNLTKAERGGLLPEDKAGFIQRQLVETRQITKHVARLLDEKFNNKKDENNRAVRTVKIITLKSTLVSQFRKDFELYKVREINDFHHAHDAYLNAVIASALLKKYPKLEPEFVYGDYPKYNSFRERKSATEKVYFYSNIMNIFKKSISLADGRVIERPLIEVNEETGESVWNKESDLATVRRVLSYPQVNVVKKVEEQNHGLDRGKPKGLFNANLSSKPKPNSNENLVGAKEYLDPKKYGGYAGISNSFAVLVKGTIEKGAKKKITNVLEFQGISILDRINYRKDKLNFLLEKGYKDIELIIELPKYSLFELSDGSRRMLASILSTNNKRGEIHKGNQIFLSQKFVKLLYHAKRISNTINENHRKYVENHKKEFEELFYYILEFNENYVGAKKNGKLLNSAFQSWQNHSIDELCSSFIGPTGSERKGLFELTSRGSAADFEFLGVKIPRYRDYTPSSLLKDATLIHQSVTGLYETRIDLAKLGEG</sequence>
<accession>G3ECR1</accession>
<name>CAS9_STRTR</name>
<organism>
    <name type="scientific">Streptococcus thermophilus</name>
    <dbReference type="NCBI Taxonomy" id="1308"/>
    <lineage>
        <taxon>Bacteria</taxon>
        <taxon>Bacillati</taxon>
        <taxon>Bacillota</taxon>
        <taxon>Bacilli</taxon>
        <taxon>Lactobacillales</taxon>
        <taxon>Streptococcaceae</taxon>
        <taxon>Streptococcus</taxon>
    </lineage>
</organism>
<evidence type="ECO:0000255" key="1">
    <source>
        <dbReference type="HAMAP-Rule" id="MF_01480"/>
    </source>
</evidence>
<evidence type="ECO:0000255" key="2">
    <source>
        <dbReference type="PROSITE-ProRule" id="PRU01085"/>
    </source>
</evidence>
<evidence type="ECO:0000256" key="3">
    <source>
        <dbReference type="SAM" id="MobiDB-lite"/>
    </source>
</evidence>
<evidence type="ECO:0000269" key="4">
    <source>
    </source>
</evidence>
<evidence type="ECO:0000269" key="5">
    <source>
    </source>
</evidence>
<evidence type="ECO:0000269" key="6">
    <source>
    </source>
</evidence>
<evidence type="ECO:0000305" key="7"/>
<evidence type="ECO:0000305" key="8">
    <source>
    </source>
</evidence>
<dbReference type="EC" id="3.1.-.-" evidence="1"/>
<dbReference type="EMBL" id="HQ712120">
    <property type="protein sequence ID" value="AEM62887.1"/>
    <property type="status" value="ALT_INIT"/>
    <property type="molecule type" value="Genomic_DNA"/>
</dbReference>
<dbReference type="RefSeq" id="WP_024703962.1">
    <property type="nucleotide sequence ID" value="NZ_WMLD01000001.1"/>
</dbReference>
<dbReference type="PDB" id="8PJ9">
    <property type="method" value="EM"/>
    <property type="resolution" value="3.24 A"/>
    <property type="chains" value="A=22-1409"/>
</dbReference>
<dbReference type="PDBsum" id="8PJ9"/>
<dbReference type="EMDB" id="EMD-17702"/>
<dbReference type="SMR" id="G3ECR1"/>
<dbReference type="eggNOG" id="COG3513">
    <property type="taxonomic scope" value="Bacteria"/>
</dbReference>
<dbReference type="GO" id="GO:0003677">
    <property type="term" value="F:DNA binding"/>
    <property type="evidence" value="ECO:0007669"/>
    <property type="project" value="UniProtKB-KW"/>
</dbReference>
<dbReference type="GO" id="GO:0004519">
    <property type="term" value="F:endonuclease activity"/>
    <property type="evidence" value="ECO:0007669"/>
    <property type="project" value="UniProtKB-UniRule"/>
</dbReference>
<dbReference type="GO" id="GO:0046872">
    <property type="term" value="F:metal ion binding"/>
    <property type="evidence" value="ECO:0007669"/>
    <property type="project" value="UniProtKB-UniRule"/>
</dbReference>
<dbReference type="GO" id="GO:0003723">
    <property type="term" value="F:RNA binding"/>
    <property type="evidence" value="ECO:0007669"/>
    <property type="project" value="UniProtKB-KW"/>
</dbReference>
<dbReference type="GO" id="GO:0051607">
    <property type="term" value="P:defense response to virus"/>
    <property type="evidence" value="ECO:0007669"/>
    <property type="project" value="UniProtKB-UniRule"/>
</dbReference>
<dbReference type="GO" id="GO:0043571">
    <property type="term" value="P:maintenance of CRISPR repeat elements"/>
    <property type="evidence" value="ECO:0007669"/>
    <property type="project" value="UniProtKB-UniRule"/>
</dbReference>
<dbReference type="Gene3D" id="1.10.30.50">
    <property type="match status" value="1"/>
</dbReference>
<dbReference type="Gene3D" id="3.30.420.10">
    <property type="entry name" value="Ribonuclease H-like superfamily/Ribonuclease H"/>
    <property type="match status" value="1"/>
</dbReference>
<dbReference type="HAMAP" id="MF_01480">
    <property type="entry name" value="Cas9"/>
    <property type="match status" value="1"/>
</dbReference>
<dbReference type="InterPro" id="IPR028629">
    <property type="entry name" value="Cas9"/>
</dbReference>
<dbReference type="InterPro" id="IPR032239">
    <property type="entry name" value="Cas9-BH"/>
</dbReference>
<dbReference type="InterPro" id="IPR032237">
    <property type="entry name" value="Cas9_PI"/>
</dbReference>
<dbReference type="InterPro" id="IPR032240">
    <property type="entry name" value="Cas9_REC"/>
</dbReference>
<dbReference type="InterPro" id="IPR055228">
    <property type="entry name" value="Cas9_RuvC"/>
</dbReference>
<dbReference type="InterPro" id="IPR033114">
    <property type="entry name" value="HNH_CAS9"/>
</dbReference>
<dbReference type="InterPro" id="IPR003615">
    <property type="entry name" value="HNH_nuc"/>
</dbReference>
<dbReference type="InterPro" id="IPR036397">
    <property type="entry name" value="RNaseH_sf"/>
</dbReference>
<dbReference type="NCBIfam" id="TIGR01865">
    <property type="entry name" value="cas_Csn1"/>
    <property type="match status" value="1"/>
</dbReference>
<dbReference type="Pfam" id="PF16593">
    <property type="entry name" value="Cas9-BH"/>
    <property type="match status" value="1"/>
</dbReference>
<dbReference type="Pfam" id="PF16595">
    <property type="entry name" value="Cas9_PI"/>
    <property type="match status" value="1"/>
</dbReference>
<dbReference type="Pfam" id="PF16592">
    <property type="entry name" value="Cas9_REC"/>
    <property type="match status" value="1"/>
</dbReference>
<dbReference type="Pfam" id="PF22702">
    <property type="entry name" value="Cas9_RuvC"/>
    <property type="match status" value="1"/>
</dbReference>
<dbReference type="Pfam" id="PF13395">
    <property type="entry name" value="HNH_4"/>
    <property type="match status" value="1"/>
</dbReference>
<dbReference type="PROSITE" id="PS51749">
    <property type="entry name" value="HNH_CAS9"/>
    <property type="match status" value="1"/>
</dbReference>
<protein>
    <recommendedName>
        <fullName evidence="1">CRISPR-associated endonuclease Cas9</fullName>
        <ecNumber evidence="1">3.1.-.-</ecNumber>
    </recommendedName>
    <alternativeName>
        <fullName>St-Cas9</fullName>
    </alternativeName>
</protein>
<reference key="1">
    <citation type="journal article" date="2011" name="Nucleic Acids Res.">
        <title>The Streptococcus thermophilus CRISPR/Cas system provides immunity in Escherichia coli.</title>
        <authorList>
            <person name="Sapranauskas R."/>
            <person name="Gasiunas G."/>
            <person name="Fremaux C."/>
            <person name="Barrangou R."/>
            <person name="Horvath P."/>
            <person name="Siksnys V."/>
        </authorList>
    </citation>
    <scope>NUCLEOTIDE SEQUENCE [GENOMIC DNA]</scope>
    <scope>FUNCTION IN PLASMID RESISTANCE</scope>
    <scope>EXPRESSION OF CRISPR3/CAS IN E.COLI</scope>
    <scope>DISRUPTION PHENOTYPE</scope>
    <scope>MUTAGENESIS OF ASP-31; HIS-868; ASN-882 AND ASN-891</scope>
    <source>
        <strain>DGCC7710</strain>
    </source>
</reference>
<reference key="2">
    <citation type="journal article" date="2012" name="Proc. Natl. Acad. Sci. U.S.A.">
        <title>Cas9-crRNA ribonucleoprotein complex mediates specific DNA cleavage for adaptive immunity in bacteria.</title>
        <authorList>
            <person name="Gasiunas G."/>
            <person name="Barrangou R."/>
            <person name="Horvath P."/>
            <person name="Siksnys V."/>
        </authorList>
    </citation>
    <scope>FUNCTION AS A DNA ENDONUCLEASE</scope>
    <scope>COFACTOR</scope>
    <scope>SUBUNIT</scope>
    <scope>POSSIBLE BIOTECHNOLOGY</scope>
    <scope>DNA-BINDING</scope>
    <scope>RNA-BINDING</scope>
    <scope>EXPRESSION IN E.COLI</scope>
    <scope>MUTAGENESIS OF ASP-31 AND ASN-891</scope>
    <source>
        <strain>DGCC7710</strain>
    </source>
</reference>
<reference key="3">
    <citation type="journal article" date="2013" name="RNA Biol.">
        <title>crRNA and tracrRNA guide Cas9-mediated DNA interference in Streptococcus thermophilus.</title>
        <authorList>
            <person name="Karvelis T."/>
            <person name="Gasiunas G."/>
            <person name="Miksys A."/>
            <person name="Barrangou R."/>
            <person name="Horvath P."/>
            <person name="Siksnys V."/>
        </authorList>
    </citation>
    <scope>FUNCTION</scope>
    <scope>ACTIVITY REGULATION</scope>
    <scope>TRACRRNA-BINDING</scope>
    <scope>RNA-BINDING</scope>
    <scope>EXPRESSION IN E.COLI</scope>
    <source>
        <strain>DGCC7710</strain>
    </source>
</reference>
<reference key="4">
    <citation type="journal article" date="2023" name="Nat. Commun.">
        <title>Assessing and advancing the safety of CRISPR-Cas tools: from DNA to RNA editing.</title>
        <authorList>
            <person name="Tao J."/>
            <person name="Bauer D.E."/>
            <person name="Chiarle R."/>
        </authorList>
    </citation>
    <scope>REVIEW ON SAFETY OF GENOME EDITING TOOLS</scope>
</reference>
<feature type="chain" id="PRO_0000417879" description="CRISPR-associated endonuclease Cas9">
    <location>
        <begin position="1"/>
        <end position="1409"/>
    </location>
</feature>
<feature type="domain" description="HNH Cas9-type" evidence="2">
    <location>
        <begin position="792"/>
        <end position="949"/>
    </location>
</feature>
<feature type="region of interest" description="Disordered" evidence="3">
    <location>
        <begin position="1121"/>
        <end position="1151"/>
    </location>
</feature>
<feature type="compositionally biased region" description="Basic and acidic residues" evidence="3">
    <location>
        <begin position="1121"/>
        <end position="1130"/>
    </location>
</feature>
<feature type="compositionally biased region" description="Polar residues" evidence="3">
    <location>
        <begin position="1137"/>
        <end position="1150"/>
    </location>
</feature>
<feature type="active site" description="For RuvC-like nuclease domain" evidence="1">
    <location>
        <position position="31"/>
    </location>
</feature>
<feature type="active site" description="Proton acceptor for HNH nuclease domain" evidence="1">
    <location>
        <position position="868"/>
    </location>
</feature>
<feature type="binding site" evidence="1">
    <location>
        <position position="31"/>
    </location>
    <ligand>
        <name>Mg(2+)</name>
        <dbReference type="ChEBI" id="CHEBI:18420"/>
        <label>1</label>
    </ligand>
</feature>
<feature type="binding site" evidence="1">
    <location>
        <position position="31"/>
    </location>
    <ligand>
        <name>Mg(2+)</name>
        <dbReference type="ChEBI" id="CHEBI:18420"/>
        <label>2</label>
    </ligand>
</feature>
<feature type="binding site" evidence="1">
    <location>
        <position position="784"/>
    </location>
    <ligand>
        <name>Mg(2+)</name>
        <dbReference type="ChEBI" id="CHEBI:18420"/>
        <label>1</label>
    </ligand>
</feature>
<feature type="binding site" evidence="1">
    <location>
        <position position="788"/>
    </location>
    <ligand>
        <name>Mg(2+)</name>
        <dbReference type="ChEBI" id="CHEBI:18420"/>
        <label>1</label>
    </ligand>
</feature>
<feature type="binding site" evidence="1">
    <location>
        <position position="788"/>
    </location>
    <ligand>
        <name>Mg(2+)</name>
        <dbReference type="ChEBI" id="CHEBI:18420"/>
        <label>2</label>
    </ligand>
</feature>
<feature type="binding site" evidence="1">
    <location>
        <position position="1011"/>
    </location>
    <ligand>
        <name>Mg(2+)</name>
        <dbReference type="ChEBI" id="CHEBI:18420"/>
        <label>2</label>
    </ligand>
</feature>
<feature type="mutagenesis site" description="No longer prevents plasmid transformation. Target DNA noncomplementary to the crRNA is not cleaved." evidence="4 5">
    <original>D</original>
    <variation>A</variation>
    <location>
        <position position="31"/>
    </location>
</feature>
<feature type="mutagenesis site" description="No longer prevents plasmid transformation. Target DNA complementary to the crRNA is not cleaved." evidence="4">
    <original>H</original>
    <variation>A</variation>
    <location>
        <position position="868"/>
    </location>
</feature>
<feature type="mutagenesis site" description="No longer prevents plasmid transformation." evidence="4">
    <original>N</original>
    <variation>A</variation>
    <location>
        <position position="882"/>
    </location>
</feature>
<feature type="mutagenesis site" description="No longer prevents plasmid transformation." evidence="4 5">
    <original>N</original>
    <variation>A</variation>
    <location>
        <position position="891"/>
    </location>
</feature>
<comment type="function">
    <text evidence="4 5 6 7">CRISPR (clustered regularly interspaced short palindromic repeat) is an adaptive immune system that provides protection against mobile genetic elements (viruses, transposable elements and conjugative plasmids). CRISPR clusters contain spacers, sequences complementary to antecedent mobile elements, and target invading nucleic acids. CRISPR clusters are transcribed and processed into CRISPR RNA (crRNA). In type II CRISPR systems correct processing of pre-crRNA requires a trans-encoded small RNA (tracrRNA), endogenous ribonuclease 3 (rnc) and Cas9. The tracrRNA serves as a guide for ribonuclease 3-aided processing of pre-crRNA (Probable). Cas9/crRNA/tracrRNA endonucleolytically cleaves linear or circular dsDNA target complementary to the spacer yielding blunt ends; Cas9 is inactive in the absence of the 2 guide RNAs (gRNA). Cas9 recognizes a 3'-G-rich protospacer adjacent motif (PAM, TGGTG in this organism) in the CRISPR repeat sequences to help distinguish self versus nonself, as targets within the bacterial CRISPR locus do not have PAMs. PAM recognition is also required for catalytic activity. When the CRISPR3/cas system consisting of cas9-cas1-cas2-csn2-CRISPR3 or just cas9-CRISPR3 is expressed in E.coli it prevents plasmids homologous to spacers 1 or 2 from transforming.</text>
</comment>
<comment type="cofactor">
    <cofactor evidence="5">
        <name>Mg(2+)</name>
        <dbReference type="ChEBI" id="CHEBI:18420"/>
    </cofactor>
    <text evidence="5">Endonuclease activity on target DNA requires Mg(2+).</text>
</comment>
<comment type="activity regulation">
    <text evidence="6">Only has nuclease activity when bound to both gRNAs (crRNA plus tracrRNA).</text>
</comment>
<comment type="subunit">
    <text evidence="1 5 7">Monomer (Probable). Binds crRNA and tracrRNA.</text>
</comment>
<comment type="domain">
    <text evidence="1">Has 2 endonuclease domains. The discontinuous RuvC-like domain cleaves the target DNA noncomplementary to crRNA while the HNH nuclease domain cleaves the target DNA complementary to crRNA.</text>
</comment>
<comment type="disruption phenotype">
    <text evidence="4">Plasmid transformation is restored.</text>
</comment>
<comment type="biotechnology">
    <text evidence="8">The simplicity of the Cas9-gRNAs RNA-directed DNA endonuclease activity may be used to target and modify a DNA sequence of interest.</text>
</comment>
<comment type="miscellaneous">
    <text>This strain encodes 4 CRISPR-Cas systems; this is CRISPR3.</text>
</comment>
<comment type="similarity">
    <text evidence="7">Belongs to the CRISPR-associated protein Cas9 family. Subtype II-A subfamily.</text>
</comment>
<comment type="caution">
    <text evidence="7">It is uncertain whether Met-1 or Met-22 is the initiator.</text>
</comment>
<comment type="sequence caution" evidence="7">
    <conflict type="erroneous initiation">
        <sequence resource="EMBL-CDS" id="AEM62887"/>
    </conflict>
    <text>Truncated N-terminus.</text>
</comment>
<gene>
    <name evidence="1" type="primary">cas9</name>
    <name type="synonym">csn1</name>
</gene>
<proteinExistence type="evidence at protein level"/>